<evidence type="ECO:0000250" key="1">
    <source>
        <dbReference type="UniProtKB" id="P9WJJ5"/>
    </source>
</evidence>
<evidence type="ECO:0000255" key="2">
    <source>
        <dbReference type="HAMAP-Rule" id="MF_00244"/>
    </source>
</evidence>
<keyword id="KW-0067">ATP-binding</keyword>
<keyword id="KW-0520">NAD</keyword>
<keyword id="KW-0547">Nucleotide-binding</keyword>
<keyword id="KW-0548">Nucleotidyltransferase</keyword>
<keyword id="KW-0662">Pyridine nucleotide biosynthesis</keyword>
<keyword id="KW-0808">Transferase</keyword>
<sequence>MGVMGGTFDPIHYGHLVAASEVADLFDLDEVVFVPSGQPWQKGRQVSAAEHRYLMTVIATASNPRFSVSRVDIDRGGPTYTKDTLADLHALHPDSELYFTTGADALASIMSWQGWEELFELARFVGVSRPGYELRNEHITSLLGQLAKDALTLVEIPALAISSTDCRQRAEQSRPLWYLMPDSVVQYVSKCRLYCGACDAGARSTTSLAAGNGL</sequence>
<reference key="1">
    <citation type="journal article" date="2007" name="Proc. Natl. Acad. Sci. U.S.A.">
        <title>Genome plasticity of BCG and impact on vaccine efficacy.</title>
        <authorList>
            <person name="Brosch R."/>
            <person name="Gordon S.V."/>
            <person name="Garnier T."/>
            <person name="Eiglmeier K."/>
            <person name="Frigui W."/>
            <person name="Valenti P."/>
            <person name="Dos Santos S."/>
            <person name="Duthoy S."/>
            <person name="Lacroix C."/>
            <person name="Garcia-Pelayo C."/>
            <person name="Inwald J.K."/>
            <person name="Golby P."/>
            <person name="Garcia J.N."/>
            <person name="Hewinson R.G."/>
            <person name="Behr M.A."/>
            <person name="Quail M.A."/>
            <person name="Churcher C."/>
            <person name="Barrell B.G."/>
            <person name="Parkhill J."/>
            <person name="Cole S.T."/>
        </authorList>
    </citation>
    <scope>NUCLEOTIDE SEQUENCE [LARGE SCALE GENOMIC DNA]</scope>
    <source>
        <strain>BCG / Pasteur 1173P2</strain>
    </source>
</reference>
<accession>A1KLB3</accession>
<name>NADD_MYCBP</name>
<comment type="function">
    <text evidence="2">Catalyzes the reversible adenylation of nicotinate mononucleotide (NaMN) to nicotinic acid adenine dinucleotide (NaAD).</text>
</comment>
<comment type="catalytic activity">
    <reaction evidence="2">
        <text>nicotinate beta-D-ribonucleotide + ATP + H(+) = deamido-NAD(+) + diphosphate</text>
        <dbReference type="Rhea" id="RHEA:22860"/>
        <dbReference type="ChEBI" id="CHEBI:15378"/>
        <dbReference type="ChEBI" id="CHEBI:30616"/>
        <dbReference type="ChEBI" id="CHEBI:33019"/>
        <dbReference type="ChEBI" id="CHEBI:57502"/>
        <dbReference type="ChEBI" id="CHEBI:58437"/>
        <dbReference type="EC" id="2.7.7.18"/>
    </reaction>
</comment>
<comment type="pathway">
    <text evidence="2">Cofactor biosynthesis; NAD(+) biosynthesis; deamido-NAD(+) from nicotinate D-ribonucleotide: step 1/1.</text>
</comment>
<comment type="similarity">
    <text evidence="2">Belongs to the NadD family.</text>
</comment>
<comment type="sequence caution" evidence="1">
    <conflict type="erroneous initiation">
        <sequence resource="EMBL-CDS" id="CAL72425"/>
    </conflict>
    <text>Truncated N-terminus.</text>
</comment>
<organism>
    <name type="scientific">Mycobacterium bovis (strain BCG / Pasteur 1173P2)</name>
    <dbReference type="NCBI Taxonomy" id="410289"/>
    <lineage>
        <taxon>Bacteria</taxon>
        <taxon>Bacillati</taxon>
        <taxon>Actinomycetota</taxon>
        <taxon>Actinomycetes</taxon>
        <taxon>Mycobacteriales</taxon>
        <taxon>Mycobacteriaceae</taxon>
        <taxon>Mycobacterium</taxon>
        <taxon>Mycobacterium tuberculosis complex</taxon>
    </lineage>
</organism>
<gene>
    <name evidence="2" type="primary">nadD</name>
    <name type="ordered locus">BCG_2437c</name>
</gene>
<dbReference type="EC" id="2.7.7.18" evidence="2"/>
<dbReference type="EMBL" id="AM408590">
    <property type="protein sequence ID" value="CAL72425.1"/>
    <property type="status" value="ALT_INIT"/>
    <property type="molecule type" value="Genomic_DNA"/>
</dbReference>
<dbReference type="RefSeq" id="WP_256381315.1">
    <property type="nucleotide sequence ID" value="NC_008769.1"/>
</dbReference>
<dbReference type="SMR" id="A1KLB3"/>
<dbReference type="KEGG" id="mbb:BCG_2437c"/>
<dbReference type="HOGENOM" id="CLU_069765_1_1_11"/>
<dbReference type="UniPathway" id="UPA00253">
    <property type="reaction ID" value="UER00332"/>
</dbReference>
<dbReference type="Proteomes" id="UP000001472">
    <property type="component" value="Chromosome"/>
</dbReference>
<dbReference type="GO" id="GO:0005524">
    <property type="term" value="F:ATP binding"/>
    <property type="evidence" value="ECO:0007669"/>
    <property type="project" value="UniProtKB-KW"/>
</dbReference>
<dbReference type="GO" id="GO:0004515">
    <property type="term" value="F:nicotinate-nucleotide adenylyltransferase activity"/>
    <property type="evidence" value="ECO:0007669"/>
    <property type="project" value="UniProtKB-UniRule"/>
</dbReference>
<dbReference type="GO" id="GO:0009435">
    <property type="term" value="P:NAD biosynthetic process"/>
    <property type="evidence" value="ECO:0007669"/>
    <property type="project" value="UniProtKB-UniRule"/>
</dbReference>
<dbReference type="CDD" id="cd02165">
    <property type="entry name" value="NMNAT"/>
    <property type="match status" value="1"/>
</dbReference>
<dbReference type="FunFam" id="3.40.50.620:FF:000039">
    <property type="entry name" value="Probable nicotinate-nucleotide adenylyltransferase"/>
    <property type="match status" value="1"/>
</dbReference>
<dbReference type="Gene3D" id="3.40.50.620">
    <property type="entry name" value="HUPs"/>
    <property type="match status" value="1"/>
</dbReference>
<dbReference type="HAMAP" id="MF_00244">
    <property type="entry name" value="NaMN_adenylyltr"/>
    <property type="match status" value="1"/>
</dbReference>
<dbReference type="InterPro" id="IPR004821">
    <property type="entry name" value="Cyt_trans-like"/>
</dbReference>
<dbReference type="InterPro" id="IPR005248">
    <property type="entry name" value="NadD/NMNAT"/>
</dbReference>
<dbReference type="InterPro" id="IPR014729">
    <property type="entry name" value="Rossmann-like_a/b/a_fold"/>
</dbReference>
<dbReference type="NCBIfam" id="TIGR00125">
    <property type="entry name" value="cyt_tran_rel"/>
    <property type="match status" value="1"/>
</dbReference>
<dbReference type="NCBIfam" id="TIGR00482">
    <property type="entry name" value="nicotinate (nicotinamide) nucleotide adenylyltransferase"/>
    <property type="match status" value="1"/>
</dbReference>
<dbReference type="NCBIfam" id="NF000840">
    <property type="entry name" value="PRK00071.1-3"/>
    <property type="match status" value="1"/>
</dbReference>
<dbReference type="PANTHER" id="PTHR39321">
    <property type="entry name" value="NICOTINATE-NUCLEOTIDE ADENYLYLTRANSFERASE-RELATED"/>
    <property type="match status" value="1"/>
</dbReference>
<dbReference type="PANTHER" id="PTHR39321:SF3">
    <property type="entry name" value="PHOSPHOPANTETHEINE ADENYLYLTRANSFERASE"/>
    <property type="match status" value="1"/>
</dbReference>
<dbReference type="Pfam" id="PF01467">
    <property type="entry name" value="CTP_transf_like"/>
    <property type="match status" value="1"/>
</dbReference>
<dbReference type="SUPFAM" id="SSF52374">
    <property type="entry name" value="Nucleotidylyl transferase"/>
    <property type="match status" value="1"/>
</dbReference>
<feature type="chain" id="PRO_0000310124" description="Probable nicotinate-nucleotide adenylyltransferase">
    <location>
        <begin position="1"/>
        <end position="214"/>
    </location>
</feature>
<proteinExistence type="inferred from homology"/>
<protein>
    <recommendedName>
        <fullName evidence="2">Probable nicotinate-nucleotide adenylyltransferase</fullName>
        <ecNumber evidence="2">2.7.7.18</ecNumber>
    </recommendedName>
    <alternativeName>
        <fullName evidence="2">Deamido-NAD(+) diphosphorylase</fullName>
    </alternativeName>
    <alternativeName>
        <fullName evidence="2">Deamido-NAD(+) pyrophosphorylase</fullName>
    </alternativeName>
    <alternativeName>
        <fullName evidence="2">Nicotinate mononucleotide adenylyltransferase</fullName>
        <shortName evidence="2">NaMN adenylyltransferase</shortName>
    </alternativeName>
</protein>